<dbReference type="EMBL" id="AJ004903">
    <property type="protein sequence ID" value="CAA06203.1"/>
    <property type="molecule type" value="mRNA"/>
</dbReference>
<dbReference type="EMBL" id="U34615">
    <property type="protein sequence ID" value="AAC36453.1"/>
    <property type="molecule type" value="mRNA"/>
</dbReference>
<dbReference type="RefSeq" id="NP_990321.1">
    <property type="nucleotide sequence ID" value="NM_204990.1"/>
</dbReference>
<dbReference type="SMR" id="O73592"/>
<dbReference type="FunCoup" id="O73592">
    <property type="interactions" value="111"/>
</dbReference>
<dbReference type="GeneID" id="395838"/>
<dbReference type="KEGG" id="gga:395838"/>
<dbReference type="CTD" id="83881"/>
<dbReference type="VEuPathDB" id="HostDB:geneid_395838"/>
<dbReference type="InParanoid" id="O73592"/>
<dbReference type="OrthoDB" id="6159439at2759"/>
<dbReference type="PhylomeDB" id="O73592"/>
<dbReference type="PRO" id="PR:O73592"/>
<dbReference type="Proteomes" id="UP000000539">
    <property type="component" value="Unassembled WGS sequence"/>
</dbReference>
<dbReference type="GO" id="GO:0005634">
    <property type="term" value="C:nucleus"/>
    <property type="evidence" value="ECO:0000318"/>
    <property type="project" value="GO_Central"/>
</dbReference>
<dbReference type="GO" id="GO:0000981">
    <property type="term" value="F:DNA-binding transcription factor activity, RNA polymerase II-specific"/>
    <property type="evidence" value="ECO:0000318"/>
    <property type="project" value="GO_Central"/>
</dbReference>
<dbReference type="GO" id="GO:0000978">
    <property type="term" value="F:RNA polymerase II cis-regulatory region sequence-specific DNA binding"/>
    <property type="evidence" value="ECO:0000318"/>
    <property type="project" value="GO_Central"/>
</dbReference>
<dbReference type="GO" id="GO:0030154">
    <property type="term" value="P:cell differentiation"/>
    <property type="evidence" value="ECO:0007669"/>
    <property type="project" value="UniProtKB-KW"/>
</dbReference>
<dbReference type="GO" id="GO:0006357">
    <property type="term" value="P:regulation of transcription by RNA polymerase II"/>
    <property type="evidence" value="ECO:0000318"/>
    <property type="project" value="GO_Central"/>
</dbReference>
<dbReference type="CDD" id="cd00086">
    <property type="entry name" value="homeodomain"/>
    <property type="match status" value="1"/>
</dbReference>
<dbReference type="FunFam" id="1.10.10.60:FF:000312">
    <property type="entry name" value="Mix-type homeobox gene 1"/>
    <property type="match status" value="1"/>
</dbReference>
<dbReference type="Gene3D" id="1.10.10.60">
    <property type="entry name" value="Homeodomain-like"/>
    <property type="match status" value="1"/>
</dbReference>
<dbReference type="InterPro" id="IPR001356">
    <property type="entry name" value="HD"/>
</dbReference>
<dbReference type="InterPro" id="IPR017970">
    <property type="entry name" value="Homeobox_CS"/>
</dbReference>
<dbReference type="InterPro" id="IPR009057">
    <property type="entry name" value="Homeodomain-like_sf"/>
</dbReference>
<dbReference type="PANTHER" id="PTHR45793:SF22">
    <property type="entry name" value="CONE-ROD HOMEOBOX PROTEIN"/>
    <property type="match status" value="1"/>
</dbReference>
<dbReference type="PANTHER" id="PTHR45793">
    <property type="entry name" value="HOMEOBOX PROTEIN"/>
    <property type="match status" value="1"/>
</dbReference>
<dbReference type="Pfam" id="PF00046">
    <property type="entry name" value="Homeodomain"/>
    <property type="match status" value="1"/>
</dbReference>
<dbReference type="SMART" id="SM00389">
    <property type="entry name" value="HOX"/>
    <property type="match status" value="1"/>
</dbReference>
<dbReference type="SUPFAM" id="SSF46689">
    <property type="entry name" value="Homeodomain-like"/>
    <property type="match status" value="1"/>
</dbReference>
<dbReference type="PROSITE" id="PS00027">
    <property type="entry name" value="HOMEOBOX_1"/>
    <property type="match status" value="1"/>
</dbReference>
<dbReference type="PROSITE" id="PS50071">
    <property type="entry name" value="HOMEOBOX_2"/>
    <property type="match status" value="1"/>
</dbReference>
<reference key="1">
    <citation type="journal article" date="1998" name="Mech. Dev.">
        <title>CMIX, a paired-type homeobox gene expressed before and during formation of the avian primitive streak.</title>
        <authorList>
            <person name="Stein S."/>
            <person name="Roeser T."/>
            <person name="Kessel M."/>
        </authorList>
    </citation>
    <scope>NUCLEOTIDE SEQUENCE [MRNA] OF 56-210 (ISOFORM 2)</scope>
    <scope>DEVELOPMENTAL STAGE</scope>
    <source>
        <tissue>Hensens node</tissue>
    </source>
</reference>
<reference key="2">
    <citation type="journal article" date="1998" name="Mech. Dev.">
        <title>Characterization of CMIX, a chicken homeobox gene related to the Xenopus gene mix.1.</title>
        <authorList>
            <person name="Peale F.V. Jr."/>
            <person name="Sugden L."/>
            <person name="Bothwell M."/>
        </authorList>
    </citation>
    <scope>NUCLEOTIDE SEQUENCE [MRNA] (ISOFORM 1)</scope>
    <scope>DEVELOPMENTAL STAGE</scope>
    <source>
        <strain>White leghorn</strain>
    </source>
</reference>
<protein>
    <recommendedName>
        <fullName>Homeobox protein MIXL1</fullName>
    </recommendedName>
    <alternativeName>
        <fullName>Homeodomain protein MIX</fullName>
        <shortName>cMIX</shortName>
    </alternativeName>
    <alternativeName>
        <fullName>MIX1 homeobox-like protein 1</fullName>
    </alternativeName>
    <alternativeName>
        <fullName>Mix.1 homeobox-like protein</fullName>
    </alternativeName>
</protein>
<feature type="chain" id="PRO_0000311335" description="Homeobox protein MIXL1">
    <location>
        <begin position="1"/>
        <end position="210"/>
    </location>
</feature>
<feature type="DNA-binding region" description="Homeobox" evidence="2">
    <location>
        <begin position="58"/>
        <end position="117"/>
    </location>
</feature>
<feature type="region of interest" description="Disordered" evidence="3">
    <location>
        <begin position="1"/>
        <end position="63"/>
    </location>
</feature>
<feature type="region of interest" description="Disordered" evidence="3">
    <location>
        <begin position="105"/>
        <end position="194"/>
    </location>
</feature>
<feature type="compositionally biased region" description="Pro residues" evidence="3">
    <location>
        <begin position="7"/>
        <end position="21"/>
    </location>
</feature>
<feature type="compositionally biased region" description="Gly residues" evidence="3">
    <location>
        <begin position="29"/>
        <end position="38"/>
    </location>
</feature>
<feature type="compositionally biased region" description="Low complexity" evidence="3">
    <location>
        <begin position="39"/>
        <end position="57"/>
    </location>
</feature>
<feature type="compositionally biased region" description="Basic residues" evidence="3">
    <location>
        <begin position="109"/>
        <end position="118"/>
    </location>
</feature>
<feature type="compositionally biased region" description="Pro residues" evidence="3">
    <location>
        <begin position="119"/>
        <end position="134"/>
    </location>
</feature>
<feature type="compositionally biased region" description="Basic and acidic residues" evidence="3">
    <location>
        <begin position="144"/>
        <end position="153"/>
    </location>
</feature>
<feature type="compositionally biased region" description="Pro residues" evidence="3">
    <location>
        <begin position="176"/>
        <end position="185"/>
    </location>
</feature>
<feature type="splice variant" id="VSP_029524" description="In isoform 2." evidence="6">
    <original>QRGPPRPGAPAPPPPPPQRSPCGAAPLLRAREEHREWPPRAAGPPGSALRPHGGSGGAPAGPYPPRPAFPLPAGGGFSELGTEWEENAIGAFRAL</original>
    <variation>RRLLGAGNGVGGERHRRLPSPLTAGRPCPRLFALYPVDCAYLCTGDGGGCAGCRHRVTLFTASI</variation>
    <location>
        <begin position="116"/>
        <end position="210"/>
    </location>
</feature>
<proteinExistence type="evidence at transcript level"/>
<comment type="function">
    <text evidence="1">Transcription factor that play a central role in proper axial mesendoderm morphogenesis and endoderm formation. Required for efficient differentiation of cells from the primitive streak stage to blood (By similarity).</text>
</comment>
<comment type="subcellular location">
    <subcellularLocation>
        <location evidence="2">Nucleus</location>
    </subcellularLocation>
</comment>
<comment type="alternative products">
    <event type="alternative splicing"/>
    <isoform>
        <id>O73592-1</id>
        <name>1</name>
        <sequence type="displayed"/>
    </isoform>
    <isoform>
        <id>O73592-2</id>
        <name>2</name>
        <sequence type="described" ref="VSP_029524"/>
    </isoform>
</comment>
<comment type="developmental stage">
    <text evidence="4 5">Expressed early in embryogenis in a sickle-shaped area in the posterior zone of the blastoderm. With the beginning of gastrulation, it is found in the primitive streak primordium, then in the young and medium-sized streak, however not in the mesoderm after its emergence. In the fully-extended streak, it is restricted to its middle, i.e. the prospective ventral mesoderm. It is then undetectable by in later stages.</text>
</comment>
<comment type="similarity">
    <text evidence="7">Belongs to the paired homeobox family.</text>
</comment>
<evidence type="ECO:0000250" key="1"/>
<evidence type="ECO:0000255" key="2">
    <source>
        <dbReference type="PROSITE-ProRule" id="PRU00108"/>
    </source>
</evidence>
<evidence type="ECO:0000256" key="3">
    <source>
        <dbReference type="SAM" id="MobiDB-lite"/>
    </source>
</evidence>
<evidence type="ECO:0000269" key="4">
    <source>
    </source>
</evidence>
<evidence type="ECO:0000269" key="5">
    <source>
    </source>
</evidence>
<evidence type="ECO:0000303" key="6">
    <source>
    </source>
</evidence>
<evidence type="ECO:0000305" key="7"/>
<organism>
    <name type="scientific">Gallus gallus</name>
    <name type="common">Chicken</name>
    <dbReference type="NCBI Taxonomy" id="9031"/>
    <lineage>
        <taxon>Eukaryota</taxon>
        <taxon>Metazoa</taxon>
        <taxon>Chordata</taxon>
        <taxon>Craniata</taxon>
        <taxon>Vertebrata</taxon>
        <taxon>Euteleostomi</taxon>
        <taxon>Archelosauria</taxon>
        <taxon>Archosauria</taxon>
        <taxon>Dinosauria</taxon>
        <taxon>Saurischia</taxon>
        <taxon>Theropoda</taxon>
        <taxon>Coelurosauria</taxon>
        <taxon>Aves</taxon>
        <taxon>Neognathae</taxon>
        <taxon>Galloanserae</taxon>
        <taxon>Galliformes</taxon>
        <taxon>Phasianidae</taxon>
        <taxon>Phasianinae</taxon>
        <taxon>Gallus</taxon>
    </lineage>
</organism>
<sequence length="210" mass="21981">MAALRFGPPPAELPAVPPSCPPGRWLCGTAGGSGGGPGAAPAPLASLPPAAEGAPSAQRRKRTSFTAAQLETLELVFQDTMYPDIYLRERLADATQIPESRIQVWFQNRRAKSRRQRGPPRPGAPAPPPPPPQRSPCGAAPLLRAREEHREWPPRAAGPPGSALRPHGGSGGAPAGPYPPRPAFPLPAGGGFSELGTEWEENAIGAFRAL</sequence>
<name>MIXL1_CHICK</name>
<keyword id="KW-0025">Alternative splicing</keyword>
<keyword id="KW-0217">Developmental protein</keyword>
<keyword id="KW-0221">Differentiation</keyword>
<keyword id="KW-0238">DNA-binding</keyword>
<keyword id="KW-0371">Homeobox</keyword>
<keyword id="KW-0539">Nucleus</keyword>
<keyword id="KW-1185">Reference proteome</keyword>
<keyword id="KW-0804">Transcription</keyword>
<keyword id="KW-0805">Transcription regulation</keyword>
<accession>O73592</accession>
<accession>O73910</accession>